<accession>A4XLS4</accession>
<feature type="chain" id="PRO_1000086101" description="Small ribosomal subunit protein uS3">
    <location>
        <begin position="1"/>
        <end position="222"/>
    </location>
</feature>
<feature type="domain" description="KH type-2" evidence="1">
    <location>
        <begin position="39"/>
        <end position="108"/>
    </location>
</feature>
<protein>
    <recommendedName>
        <fullName evidence="1">Small ribosomal subunit protein uS3</fullName>
    </recommendedName>
    <alternativeName>
        <fullName evidence="2">30S ribosomal protein S3</fullName>
    </alternativeName>
</protein>
<name>RS3_CALS8</name>
<keyword id="KW-0687">Ribonucleoprotein</keyword>
<keyword id="KW-0689">Ribosomal protein</keyword>
<keyword id="KW-0694">RNA-binding</keyword>
<keyword id="KW-0699">rRNA-binding</keyword>
<reference key="1">
    <citation type="submission" date="2007-04" db="EMBL/GenBank/DDBJ databases">
        <title>Genome sequence of the thermophilic hydrogen-producing bacterium Caldicellulosiruptor saccharolyticus DSM 8903.</title>
        <authorList>
            <person name="Copeland A."/>
            <person name="Lucas S."/>
            <person name="Lapidus A."/>
            <person name="Barry K."/>
            <person name="Detter J.C."/>
            <person name="Glavina del Rio T."/>
            <person name="Hammon N."/>
            <person name="Israni S."/>
            <person name="Dalin E."/>
            <person name="Tice H."/>
            <person name="Pitluck S."/>
            <person name="Kiss H."/>
            <person name="Brettin T."/>
            <person name="Bruce D."/>
            <person name="Han C."/>
            <person name="Schmutz J."/>
            <person name="Larimer F."/>
            <person name="Land M."/>
            <person name="Hauser L."/>
            <person name="Kyrpides N."/>
            <person name="Lykidis A."/>
            <person name="van de Werken H.J.G."/>
            <person name="Verhaart M.R.A."/>
            <person name="VanFossen A.L."/>
            <person name="Lewis D.L."/>
            <person name="Nichols J.D."/>
            <person name="Goorissen H.P."/>
            <person name="van Niel E.W.J."/>
            <person name="Stams F.J.M."/>
            <person name="Willquist K.U."/>
            <person name="Ward D.E."/>
            <person name="van der Oost J."/>
            <person name="Kelly R.M."/>
            <person name="Kengen S.M.W."/>
            <person name="Richardson P."/>
        </authorList>
    </citation>
    <scope>NUCLEOTIDE SEQUENCE [LARGE SCALE GENOMIC DNA]</scope>
    <source>
        <strain>ATCC 43494 / DSM 8903 / Tp8T 6331</strain>
    </source>
</reference>
<proteinExistence type="inferred from homology"/>
<sequence>MGQKVHPKGFRLGIIKDWDSRWFANDKDFEKYLLEDYKIRRHIKEKLYNAGISRIEIERAAKRIKVIIHTAKPGIVIGRAGSGVEALRKELEKITGGKTISLDIKEIKVPELDAQLVAENIAAQLEKRVSFRKAMKQAMARALRSGAKGIKTMVSGRLGGADIARTEWYKEGRIPLQTLRADIDYGFAEAHTTYGRIGVKTWIYKGDVLPQKGAAAEKGGDK</sequence>
<organism>
    <name type="scientific">Caldicellulosiruptor saccharolyticus (strain ATCC 43494 / DSM 8903 / Tp8T 6331)</name>
    <dbReference type="NCBI Taxonomy" id="351627"/>
    <lineage>
        <taxon>Bacteria</taxon>
        <taxon>Bacillati</taxon>
        <taxon>Bacillota</taxon>
        <taxon>Bacillota incertae sedis</taxon>
        <taxon>Caldicellulosiruptorales</taxon>
        <taxon>Caldicellulosiruptoraceae</taxon>
        <taxon>Caldicellulosiruptor</taxon>
    </lineage>
</organism>
<comment type="function">
    <text evidence="1">Binds the lower part of the 30S subunit head. Binds mRNA in the 70S ribosome, positioning it for translation.</text>
</comment>
<comment type="subunit">
    <text evidence="1">Part of the 30S ribosomal subunit. Forms a tight complex with proteins S10 and S14.</text>
</comment>
<comment type="similarity">
    <text evidence="1">Belongs to the universal ribosomal protein uS3 family.</text>
</comment>
<dbReference type="EMBL" id="CP000679">
    <property type="protein sequence ID" value="ABP67859.1"/>
    <property type="molecule type" value="Genomic_DNA"/>
</dbReference>
<dbReference type="RefSeq" id="WP_011917785.1">
    <property type="nucleotide sequence ID" value="NC_009437.1"/>
</dbReference>
<dbReference type="SMR" id="A4XLS4"/>
<dbReference type="STRING" id="351627.Csac_2281"/>
<dbReference type="KEGG" id="csc:Csac_2281"/>
<dbReference type="eggNOG" id="COG0092">
    <property type="taxonomic scope" value="Bacteria"/>
</dbReference>
<dbReference type="HOGENOM" id="CLU_058591_0_2_9"/>
<dbReference type="OrthoDB" id="9806396at2"/>
<dbReference type="Proteomes" id="UP000000256">
    <property type="component" value="Chromosome"/>
</dbReference>
<dbReference type="GO" id="GO:0022627">
    <property type="term" value="C:cytosolic small ribosomal subunit"/>
    <property type="evidence" value="ECO:0007669"/>
    <property type="project" value="TreeGrafter"/>
</dbReference>
<dbReference type="GO" id="GO:0003729">
    <property type="term" value="F:mRNA binding"/>
    <property type="evidence" value="ECO:0007669"/>
    <property type="project" value="UniProtKB-UniRule"/>
</dbReference>
<dbReference type="GO" id="GO:0019843">
    <property type="term" value="F:rRNA binding"/>
    <property type="evidence" value="ECO:0007669"/>
    <property type="project" value="UniProtKB-UniRule"/>
</dbReference>
<dbReference type="GO" id="GO:0003735">
    <property type="term" value="F:structural constituent of ribosome"/>
    <property type="evidence" value="ECO:0007669"/>
    <property type="project" value="InterPro"/>
</dbReference>
<dbReference type="GO" id="GO:0006412">
    <property type="term" value="P:translation"/>
    <property type="evidence" value="ECO:0007669"/>
    <property type="project" value="UniProtKB-UniRule"/>
</dbReference>
<dbReference type="CDD" id="cd02412">
    <property type="entry name" value="KH-II_30S_S3"/>
    <property type="match status" value="1"/>
</dbReference>
<dbReference type="FunFam" id="3.30.1140.32:FF:000006">
    <property type="entry name" value="30S ribosomal protein S3"/>
    <property type="match status" value="1"/>
</dbReference>
<dbReference type="FunFam" id="3.30.300.20:FF:000001">
    <property type="entry name" value="30S ribosomal protein S3"/>
    <property type="match status" value="1"/>
</dbReference>
<dbReference type="Gene3D" id="3.30.300.20">
    <property type="match status" value="1"/>
</dbReference>
<dbReference type="Gene3D" id="3.30.1140.32">
    <property type="entry name" value="Ribosomal protein S3, C-terminal domain"/>
    <property type="match status" value="1"/>
</dbReference>
<dbReference type="HAMAP" id="MF_01309_B">
    <property type="entry name" value="Ribosomal_uS3_B"/>
    <property type="match status" value="1"/>
</dbReference>
<dbReference type="InterPro" id="IPR004087">
    <property type="entry name" value="KH_dom"/>
</dbReference>
<dbReference type="InterPro" id="IPR015946">
    <property type="entry name" value="KH_dom-like_a/b"/>
</dbReference>
<dbReference type="InterPro" id="IPR004044">
    <property type="entry name" value="KH_dom_type_2"/>
</dbReference>
<dbReference type="InterPro" id="IPR009019">
    <property type="entry name" value="KH_sf_prok-type"/>
</dbReference>
<dbReference type="InterPro" id="IPR036419">
    <property type="entry name" value="Ribosomal_S3_C_sf"/>
</dbReference>
<dbReference type="InterPro" id="IPR005704">
    <property type="entry name" value="Ribosomal_uS3_bac-typ"/>
</dbReference>
<dbReference type="InterPro" id="IPR001351">
    <property type="entry name" value="Ribosomal_uS3_C"/>
</dbReference>
<dbReference type="InterPro" id="IPR018280">
    <property type="entry name" value="Ribosomal_uS3_CS"/>
</dbReference>
<dbReference type="NCBIfam" id="TIGR01009">
    <property type="entry name" value="rpsC_bact"/>
    <property type="match status" value="1"/>
</dbReference>
<dbReference type="PANTHER" id="PTHR11760">
    <property type="entry name" value="30S/40S RIBOSOMAL PROTEIN S3"/>
    <property type="match status" value="1"/>
</dbReference>
<dbReference type="PANTHER" id="PTHR11760:SF19">
    <property type="entry name" value="SMALL RIBOSOMAL SUBUNIT PROTEIN US3C"/>
    <property type="match status" value="1"/>
</dbReference>
<dbReference type="Pfam" id="PF07650">
    <property type="entry name" value="KH_2"/>
    <property type="match status" value="1"/>
</dbReference>
<dbReference type="Pfam" id="PF00189">
    <property type="entry name" value="Ribosomal_S3_C"/>
    <property type="match status" value="1"/>
</dbReference>
<dbReference type="SMART" id="SM00322">
    <property type="entry name" value="KH"/>
    <property type="match status" value="1"/>
</dbReference>
<dbReference type="SUPFAM" id="SSF54814">
    <property type="entry name" value="Prokaryotic type KH domain (KH-domain type II)"/>
    <property type="match status" value="1"/>
</dbReference>
<dbReference type="SUPFAM" id="SSF54821">
    <property type="entry name" value="Ribosomal protein S3 C-terminal domain"/>
    <property type="match status" value="1"/>
</dbReference>
<dbReference type="PROSITE" id="PS50823">
    <property type="entry name" value="KH_TYPE_2"/>
    <property type="match status" value="1"/>
</dbReference>
<dbReference type="PROSITE" id="PS00548">
    <property type="entry name" value="RIBOSOMAL_S3"/>
    <property type="match status" value="1"/>
</dbReference>
<evidence type="ECO:0000255" key="1">
    <source>
        <dbReference type="HAMAP-Rule" id="MF_01309"/>
    </source>
</evidence>
<evidence type="ECO:0000305" key="2"/>
<gene>
    <name evidence="1" type="primary">rpsC</name>
    <name type="ordered locus">Csac_2281</name>
</gene>